<comment type="function">
    <text evidence="1">Binds to DNA and alters its conformation. May be involved in regulation of gene expression, nucleoid organization and DNA protection.</text>
</comment>
<comment type="subunit">
    <text evidence="1">Homodimer.</text>
</comment>
<comment type="subcellular location">
    <subcellularLocation>
        <location evidence="1">Cytoplasm</location>
        <location evidence="1">Nucleoid</location>
    </subcellularLocation>
</comment>
<comment type="similarity">
    <text evidence="1">Belongs to the YbaB/EbfC family.</text>
</comment>
<accession>Q2VZR7</accession>
<dbReference type="EMBL" id="AP007255">
    <property type="protein sequence ID" value="BAE52908.1"/>
    <property type="molecule type" value="Genomic_DNA"/>
</dbReference>
<dbReference type="RefSeq" id="WP_011386454.1">
    <property type="nucleotide sequence ID" value="NC_007626.1"/>
</dbReference>
<dbReference type="SMR" id="Q2VZR7"/>
<dbReference type="STRING" id="342108.amb4104"/>
<dbReference type="KEGG" id="mag:amb4104"/>
<dbReference type="HOGENOM" id="CLU_140930_0_1_5"/>
<dbReference type="OrthoDB" id="9803080at2"/>
<dbReference type="Proteomes" id="UP000007058">
    <property type="component" value="Chromosome"/>
</dbReference>
<dbReference type="GO" id="GO:0043590">
    <property type="term" value="C:bacterial nucleoid"/>
    <property type="evidence" value="ECO:0007669"/>
    <property type="project" value="UniProtKB-UniRule"/>
</dbReference>
<dbReference type="GO" id="GO:0005829">
    <property type="term" value="C:cytosol"/>
    <property type="evidence" value="ECO:0007669"/>
    <property type="project" value="TreeGrafter"/>
</dbReference>
<dbReference type="GO" id="GO:0003677">
    <property type="term" value="F:DNA binding"/>
    <property type="evidence" value="ECO:0007669"/>
    <property type="project" value="UniProtKB-UniRule"/>
</dbReference>
<dbReference type="Gene3D" id="3.30.1310.10">
    <property type="entry name" value="Nucleoid-associated protein YbaB-like domain"/>
    <property type="match status" value="1"/>
</dbReference>
<dbReference type="HAMAP" id="MF_00274">
    <property type="entry name" value="DNA_YbaB_EbfC"/>
    <property type="match status" value="1"/>
</dbReference>
<dbReference type="InterPro" id="IPR036894">
    <property type="entry name" value="YbaB-like_sf"/>
</dbReference>
<dbReference type="InterPro" id="IPR004401">
    <property type="entry name" value="YbaB/EbfC"/>
</dbReference>
<dbReference type="NCBIfam" id="TIGR00103">
    <property type="entry name" value="DNA_YbaB_EbfC"/>
    <property type="match status" value="1"/>
</dbReference>
<dbReference type="PANTHER" id="PTHR33449">
    <property type="entry name" value="NUCLEOID-ASSOCIATED PROTEIN YBAB"/>
    <property type="match status" value="1"/>
</dbReference>
<dbReference type="PANTHER" id="PTHR33449:SF1">
    <property type="entry name" value="NUCLEOID-ASSOCIATED PROTEIN YBAB"/>
    <property type="match status" value="1"/>
</dbReference>
<dbReference type="Pfam" id="PF02575">
    <property type="entry name" value="YbaB_DNA_bd"/>
    <property type="match status" value="1"/>
</dbReference>
<dbReference type="PIRSF" id="PIRSF004555">
    <property type="entry name" value="UCP004555"/>
    <property type="match status" value="1"/>
</dbReference>
<dbReference type="SUPFAM" id="SSF82607">
    <property type="entry name" value="YbaB-like"/>
    <property type="match status" value="1"/>
</dbReference>
<name>Y4104_PARM1</name>
<sequence>MKNLGNLMKQAQQMQSKMAEMQATMAEMEVTGSSGAGMLQVTLNGKYELKKVKIDPSLVDPSDVEVLEDLILAAFNDAKAKAEAAMAEEMAKMTGGLNLPPGFKLPF</sequence>
<organism>
    <name type="scientific">Paramagnetospirillum magneticum (strain ATCC 700264 / AMB-1)</name>
    <name type="common">Magnetospirillum magneticum</name>
    <dbReference type="NCBI Taxonomy" id="342108"/>
    <lineage>
        <taxon>Bacteria</taxon>
        <taxon>Pseudomonadati</taxon>
        <taxon>Pseudomonadota</taxon>
        <taxon>Alphaproteobacteria</taxon>
        <taxon>Rhodospirillales</taxon>
        <taxon>Magnetospirillaceae</taxon>
        <taxon>Paramagnetospirillum</taxon>
    </lineage>
</organism>
<protein>
    <recommendedName>
        <fullName evidence="1">Nucleoid-associated protein amb4104</fullName>
    </recommendedName>
</protein>
<proteinExistence type="inferred from homology"/>
<keyword id="KW-0963">Cytoplasm</keyword>
<keyword id="KW-0238">DNA-binding</keyword>
<evidence type="ECO:0000255" key="1">
    <source>
        <dbReference type="HAMAP-Rule" id="MF_00274"/>
    </source>
</evidence>
<feature type="chain" id="PRO_1000003767" description="Nucleoid-associated protein amb4104">
    <location>
        <begin position="1"/>
        <end position="107"/>
    </location>
</feature>
<gene>
    <name type="ordered locus">amb4104</name>
</gene>
<reference key="1">
    <citation type="journal article" date="2005" name="DNA Res.">
        <title>Complete genome sequence of the facultative anaerobic magnetotactic bacterium Magnetospirillum sp. strain AMB-1.</title>
        <authorList>
            <person name="Matsunaga T."/>
            <person name="Okamura Y."/>
            <person name="Fukuda Y."/>
            <person name="Wahyudi A.T."/>
            <person name="Murase Y."/>
            <person name="Takeyama H."/>
        </authorList>
    </citation>
    <scope>NUCLEOTIDE SEQUENCE [LARGE SCALE GENOMIC DNA]</scope>
    <source>
        <strain>ATCC 700264 / AMB-1</strain>
    </source>
</reference>